<comment type="function">
    <text evidence="1">Catalyzes the addition and repair of the essential 3'-terminal CCA sequence in tRNAs without using a nucleic acid template. Adds these three nucleotides in the order of C, C, and A to the tRNA nucleotide-73, using CTP and ATP as substrates and producing inorganic pyrophosphate. tRNA 3'-terminal CCA addition is required both for tRNA processing and repair. Also involved in tRNA surveillance by mediating tandem CCA addition to generate a CCACCA at the 3' terminus of unstable tRNAs. While stable tRNAs receive only 3'-terminal CCA, unstable tRNAs are marked with CCACCA and rapidly degraded.</text>
</comment>
<comment type="catalytic activity">
    <reaction evidence="1">
        <text>a tRNA precursor + 2 CTP + ATP = a tRNA with a 3' CCA end + 3 diphosphate</text>
        <dbReference type="Rhea" id="RHEA:14433"/>
        <dbReference type="Rhea" id="RHEA-COMP:10465"/>
        <dbReference type="Rhea" id="RHEA-COMP:10468"/>
        <dbReference type="ChEBI" id="CHEBI:30616"/>
        <dbReference type="ChEBI" id="CHEBI:33019"/>
        <dbReference type="ChEBI" id="CHEBI:37563"/>
        <dbReference type="ChEBI" id="CHEBI:74896"/>
        <dbReference type="ChEBI" id="CHEBI:83071"/>
        <dbReference type="EC" id="2.7.7.72"/>
    </reaction>
</comment>
<comment type="catalytic activity">
    <reaction evidence="1">
        <text>a tRNA with a 3' CCA end + 2 CTP + ATP = a tRNA with a 3' CCACCA end + 3 diphosphate</text>
        <dbReference type="Rhea" id="RHEA:76235"/>
        <dbReference type="Rhea" id="RHEA-COMP:10468"/>
        <dbReference type="Rhea" id="RHEA-COMP:18655"/>
        <dbReference type="ChEBI" id="CHEBI:30616"/>
        <dbReference type="ChEBI" id="CHEBI:33019"/>
        <dbReference type="ChEBI" id="CHEBI:37563"/>
        <dbReference type="ChEBI" id="CHEBI:83071"/>
        <dbReference type="ChEBI" id="CHEBI:195187"/>
    </reaction>
    <physiologicalReaction direction="left-to-right" evidence="1">
        <dbReference type="Rhea" id="RHEA:76236"/>
    </physiologicalReaction>
</comment>
<comment type="cofactor">
    <cofactor evidence="1">
        <name>Mg(2+)</name>
        <dbReference type="ChEBI" id="CHEBI:18420"/>
    </cofactor>
    <text evidence="1">Magnesium is required for nucleotidyltransferase activity.</text>
</comment>
<comment type="cofactor">
    <cofactor evidence="1">
        <name>Ni(2+)</name>
        <dbReference type="ChEBI" id="CHEBI:49786"/>
    </cofactor>
    <text evidence="1">Nickel for phosphatase activity.</text>
</comment>
<comment type="subunit">
    <text evidence="1">Monomer. Can also form homodimers and oligomers.</text>
</comment>
<comment type="domain">
    <text evidence="1">Comprises two domains: an N-terminal domain containing the nucleotidyltransferase activity and a C-terminal HD domain associated with both phosphodiesterase and phosphatase activities.</text>
</comment>
<comment type="miscellaneous">
    <text evidence="1">A single active site specifically recognizes both ATP and CTP and is responsible for their addition.</text>
</comment>
<comment type="similarity">
    <text evidence="1">Belongs to the tRNA nucleotidyltransferase/poly(A) polymerase family. Bacterial CCA-adding enzyme type 1 subfamily.</text>
</comment>
<name>CCA_ECOL5</name>
<dbReference type="EC" id="2.7.7.72" evidence="1"/>
<dbReference type="EC" id="3.1.3.-" evidence="1"/>
<dbReference type="EC" id="3.1.4.-" evidence="1"/>
<dbReference type="EMBL" id="CP000247">
    <property type="protein sequence ID" value="ABG71129.1"/>
    <property type="molecule type" value="Genomic_DNA"/>
</dbReference>
<dbReference type="RefSeq" id="WP_000708493.1">
    <property type="nucleotide sequence ID" value="NC_008253.1"/>
</dbReference>
<dbReference type="SMR" id="Q0TD50"/>
<dbReference type="KEGG" id="ecp:ECP_3146"/>
<dbReference type="HOGENOM" id="CLU_015961_1_1_6"/>
<dbReference type="Proteomes" id="UP000009182">
    <property type="component" value="Chromosome"/>
</dbReference>
<dbReference type="GO" id="GO:0005524">
    <property type="term" value="F:ATP binding"/>
    <property type="evidence" value="ECO:0007669"/>
    <property type="project" value="UniProtKB-UniRule"/>
</dbReference>
<dbReference type="GO" id="GO:0004810">
    <property type="term" value="F:CCA tRNA nucleotidyltransferase activity"/>
    <property type="evidence" value="ECO:0007669"/>
    <property type="project" value="UniProtKB-UniRule"/>
</dbReference>
<dbReference type="GO" id="GO:0004112">
    <property type="term" value="F:cyclic-nucleotide phosphodiesterase activity"/>
    <property type="evidence" value="ECO:0007669"/>
    <property type="project" value="UniProtKB-UniRule"/>
</dbReference>
<dbReference type="GO" id="GO:0000287">
    <property type="term" value="F:magnesium ion binding"/>
    <property type="evidence" value="ECO:0007669"/>
    <property type="project" value="UniProtKB-UniRule"/>
</dbReference>
<dbReference type="GO" id="GO:0016791">
    <property type="term" value="F:phosphatase activity"/>
    <property type="evidence" value="ECO:0007669"/>
    <property type="project" value="UniProtKB-UniRule"/>
</dbReference>
<dbReference type="GO" id="GO:0000049">
    <property type="term" value="F:tRNA binding"/>
    <property type="evidence" value="ECO:0007669"/>
    <property type="project" value="UniProtKB-UniRule"/>
</dbReference>
<dbReference type="GO" id="GO:0042245">
    <property type="term" value="P:RNA repair"/>
    <property type="evidence" value="ECO:0007669"/>
    <property type="project" value="UniProtKB-KW"/>
</dbReference>
<dbReference type="GO" id="GO:0001680">
    <property type="term" value="P:tRNA 3'-terminal CCA addition"/>
    <property type="evidence" value="ECO:0007669"/>
    <property type="project" value="UniProtKB-UniRule"/>
</dbReference>
<dbReference type="CDD" id="cd00077">
    <property type="entry name" value="HDc"/>
    <property type="match status" value="1"/>
</dbReference>
<dbReference type="CDD" id="cd05398">
    <property type="entry name" value="NT_ClassII-CCAase"/>
    <property type="match status" value="1"/>
</dbReference>
<dbReference type="FunFam" id="1.10.3090.10:FF:000001">
    <property type="entry name" value="Multifunctional CCA protein"/>
    <property type="match status" value="1"/>
</dbReference>
<dbReference type="FunFam" id="3.30.460.10:FF:000016">
    <property type="entry name" value="Multifunctional CCA protein"/>
    <property type="match status" value="1"/>
</dbReference>
<dbReference type="Gene3D" id="3.30.460.10">
    <property type="entry name" value="Beta Polymerase, domain 2"/>
    <property type="match status" value="1"/>
</dbReference>
<dbReference type="Gene3D" id="1.10.3090.10">
    <property type="entry name" value="cca-adding enzyme, domain 2"/>
    <property type="match status" value="1"/>
</dbReference>
<dbReference type="HAMAP" id="MF_01261">
    <property type="entry name" value="CCA_bact_type1"/>
    <property type="match status" value="1"/>
</dbReference>
<dbReference type="HAMAP" id="MF_01262">
    <property type="entry name" value="CCA_bact_type2"/>
    <property type="match status" value="1"/>
</dbReference>
<dbReference type="InterPro" id="IPR012006">
    <property type="entry name" value="CCA_bact"/>
</dbReference>
<dbReference type="InterPro" id="IPR003607">
    <property type="entry name" value="HD/PDEase_dom"/>
</dbReference>
<dbReference type="InterPro" id="IPR006674">
    <property type="entry name" value="HD_domain"/>
</dbReference>
<dbReference type="InterPro" id="IPR043519">
    <property type="entry name" value="NT_sf"/>
</dbReference>
<dbReference type="InterPro" id="IPR002646">
    <property type="entry name" value="PolA_pol_head_dom"/>
</dbReference>
<dbReference type="InterPro" id="IPR032828">
    <property type="entry name" value="PolyA_RNA-bd"/>
</dbReference>
<dbReference type="InterPro" id="IPR050124">
    <property type="entry name" value="tRNA_CCA-adding_enzyme"/>
</dbReference>
<dbReference type="NCBIfam" id="NF008137">
    <property type="entry name" value="PRK10885.1"/>
    <property type="match status" value="1"/>
</dbReference>
<dbReference type="PANTHER" id="PTHR47545">
    <property type="entry name" value="MULTIFUNCTIONAL CCA PROTEIN"/>
    <property type="match status" value="1"/>
</dbReference>
<dbReference type="PANTHER" id="PTHR47545:SF1">
    <property type="entry name" value="MULTIFUNCTIONAL CCA PROTEIN"/>
    <property type="match status" value="1"/>
</dbReference>
<dbReference type="Pfam" id="PF01966">
    <property type="entry name" value="HD"/>
    <property type="match status" value="1"/>
</dbReference>
<dbReference type="Pfam" id="PF01743">
    <property type="entry name" value="PolyA_pol"/>
    <property type="match status" value="1"/>
</dbReference>
<dbReference type="Pfam" id="PF12627">
    <property type="entry name" value="PolyA_pol_RNAbd"/>
    <property type="match status" value="1"/>
</dbReference>
<dbReference type="PIRSF" id="PIRSF000813">
    <property type="entry name" value="CCA_bact"/>
    <property type="match status" value="1"/>
</dbReference>
<dbReference type="SUPFAM" id="SSF81301">
    <property type="entry name" value="Nucleotidyltransferase"/>
    <property type="match status" value="1"/>
</dbReference>
<dbReference type="SUPFAM" id="SSF81891">
    <property type="entry name" value="Poly A polymerase C-terminal region-like"/>
    <property type="match status" value="1"/>
</dbReference>
<dbReference type="PROSITE" id="PS51831">
    <property type="entry name" value="HD"/>
    <property type="match status" value="1"/>
</dbReference>
<feature type="chain" id="PRO_1000054263" description="Multifunctional CCA protein">
    <location>
        <begin position="1"/>
        <end position="412"/>
    </location>
</feature>
<feature type="domain" description="HD" evidence="1">
    <location>
        <begin position="228"/>
        <end position="329"/>
    </location>
</feature>
<feature type="binding site" evidence="1">
    <location>
        <position position="8"/>
    </location>
    <ligand>
        <name>ATP</name>
        <dbReference type="ChEBI" id="CHEBI:30616"/>
    </ligand>
</feature>
<feature type="binding site" evidence="1">
    <location>
        <position position="8"/>
    </location>
    <ligand>
        <name>CTP</name>
        <dbReference type="ChEBI" id="CHEBI:37563"/>
    </ligand>
</feature>
<feature type="binding site" evidence="1">
    <location>
        <position position="11"/>
    </location>
    <ligand>
        <name>ATP</name>
        <dbReference type="ChEBI" id="CHEBI:30616"/>
    </ligand>
</feature>
<feature type="binding site" evidence="1">
    <location>
        <position position="11"/>
    </location>
    <ligand>
        <name>CTP</name>
        <dbReference type="ChEBI" id="CHEBI:37563"/>
    </ligand>
</feature>
<feature type="binding site" evidence="1">
    <location>
        <position position="21"/>
    </location>
    <ligand>
        <name>Mg(2+)</name>
        <dbReference type="ChEBI" id="CHEBI:18420"/>
    </ligand>
</feature>
<feature type="binding site" evidence="1">
    <location>
        <position position="23"/>
    </location>
    <ligand>
        <name>Mg(2+)</name>
        <dbReference type="ChEBI" id="CHEBI:18420"/>
    </ligand>
</feature>
<feature type="binding site" evidence="1">
    <location>
        <position position="91"/>
    </location>
    <ligand>
        <name>ATP</name>
        <dbReference type="ChEBI" id="CHEBI:30616"/>
    </ligand>
</feature>
<feature type="binding site" evidence="1">
    <location>
        <position position="91"/>
    </location>
    <ligand>
        <name>CTP</name>
        <dbReference type="ChEBI" id="CHEBI:37563"/>
    </ligand>
</feature>
<feature type="binding site" evidence="1">
    <location>
        <position position="137"/>
    </location>
    <ligand>
        <name>ATP</name>
        <dbReference type="ChEBI" id="CHEBI:30616"/>
    </ligand>
</feature>
<feature type="binding site" evidence="1">
    <location>
        <position position="137"/>
    </location>
    <ligand>
        <name>CTP</name>
        <dbReference type="ChEBI" id="CHEBI:37563"/>
    </ligand>
</feature>
<feature type="binding site" evidence="1">
    <location>
        <position position="140"/>
    </location>
    <ligand>
        <name>ATP</name>
        <dbReference type="ChEBI" id="CHEBI:30616"/>
    </ligand>
</feature>
<feature type="binding site" evidence="1">
    <location>
        <position position="140"/>
    </location>
    <ligand>
        <name>CTP</name>
        <dbReference type="ChEBI" id="CHEBI:37563"/>
    </ligand>
</feature>
<proteinExistence type="inferred from homology"/>
<sequence length="412" mass="46382">MKIYLVGGAVRDALLGLPVKDRDWVVVGSTPQEMLDAGYQQVGRDFPVFLHPQTHEEYALARTERKSGSGYTGFTCYAAPDVTLEDDLKRRDLTINALAQDDNGEIIDPYNGLGDLQNRLLRHVSPAFGEDPLRVLRVARFAARYAHLGFRIADETLALMREMTHAGELEHLTPERVWKETESALTTRNPQVFFQVLRDCGALRVLFPEIDALFGVPAPARWHPEIDTGIHTLMTLSMAAMLSPQVDVRFATLCHDLGKGLTPPELWPRHHGHGPAGVKLVEQLCQRLRVPSEIRDLARLVAEFHDLIHTFPMLNPKTIVKLFDSIDAWRKPQRVEQLALTSEADVRGRTGFESADYPQGRWLREAWEVAQSVPTKAVVEAGFKGVGIREELTRRRIAAVASWKEQRCPKPD</sequence>
<gene>
    <name evidence="1" type="primary">cca</name>
    <name type="ordered locus">ECP_3146</name>
</gene>
<reference key="1">
    <citation type="journal article" date="2006" name="Mol. Microbiol.">
        <title>Role of pathogenicity island-associated integrases in the genome plasticity of uropathogenic Escherichia coli strain 536.</title>
        <authorList>
            <person name="Hochhut B."/>
            <person name="Wilde C."/>
            <person name="Balling G."/>
            <person name="Middendorf B."/>
            <person name="Dobrindt U."/>
            <person name="Brzuszkiewicz E."/>
            <person name="Gottschalk G."/>
            <person name="Carniel E."/>
            <person name="Hacker J."/>
        </authorList>
    </citation>
    <scope>NUCLEOTIDE SEQUENCE [LARGE SCALE GENOMIC DNA]</scope>
    <source>
        <strain>536 / UPEC</strain>
    </source>
</reference>
<accession>Q0TD50</accession>
<evidence type="ECO:0000255" key="1">
    <source>
        <dbReference type="HAMAP-Rule" id="MF_01261"/>
    </source>
</evidence>
<organism>
    <name type="scientific">Escherichia coli O6:K15:H31 (strain 536 / UPEC)</name>
    <dbReference type="NCBI Taxonomy" id="362663"/>
    <lineage>
        <taxon>Bacteria</taxon>
        <taxon>Pseudomonadati</taxon>
        <taxon>Pseudomonadota</taxon>
        <taxon>Gammaproteobacteria</taxon>
        <taxon>Enterobacterales</taxon>
        <taxon>Enterobacteriaceae</taxon>
        <taxon>Escherichia</taxon>
    </lineage>
</organism>
<protein>
    <recommendedName>
        <fullName evidence="1">Multifunctional CCA protein</fullName>
    </recommendedName>
    <domain>
        <recommendedName>
            <fullName evidence="1">CCA-adding enzyme</fullName>
            <ecNumber evidence="1">2.7.7.72</ecNumber>
        </recommendedName>
        <alternativeName>
            <fullName evidence="1">CCA tRNA nucleotidyltransferase</fullName>
        </alternativeName>
        <alternativeName>
            <fullName evidence="1">tRNA CCA-pyrophosphorylase</fullName>
        </alternativeName>
        <alternativeName>
            <fullName evidence="1">tRNA adenylyl-/cytidylyl-transferase</fullName>
        </alternativeName>
        <alternativeName>
            <fullName evidence="1">tRNA nucleotidyltransferase</fullName>
        </alternativeName>
        <alternativeName>
            <fullName evidence="1">tRNA-NT</fullName>
        </alternativeName>
    </domain>
    <domain>
        <recommendedName>
            <fullName evidence="1">2'-nucleotidase</fullName>
            <ecNumber evidence="1">3.1.3.-</ecNumber>
        </recommendedName>
    </domain>
    <domain>
        <recommendedName>
            <fullName evidence="1">2',3'-cyclic phosphodiesterase</fullName>
            <ecNumber evidence="1">3.1.4.-</ecNumber>
        </recommendedName>
    </domain>
    <domain>
        <recommendedName>
            <fullName evidence="1">Phosphatase</fullName>
            <ecNumber evidence="1">3.1.3.-</ecNumber>
        </recommendedName>
    </domain>
</protein>
<keyword id="KW-0067">ATP-binding</keyword>
<keyword id="KW-0378">Hydrolase</keyword>
<keyword id="KW-0460">Magnesium</keyword>
<keyword id="KW-0479">Metal-binding</keyword>
<keyword id="KW-0511">Multifunctional enzyme</keyword>
<keyword id="KW-0533">Nickel</keyword>
<keyword id="KW-0547">Nucleotide-binding</keyword>
<keyword id="KW-0548">Nucleotidyltransferase</keyword>
<keyword id="KW-0692">RNA repair</keyword>
<keyword id="KW-0694">RNA-binding</keyword>
<keyword id="KW-0808">Transferase</keyword>
<keyword id="KW-0819">tRNA processing</keyword>